<feature type="chain" id="PRO_1000050815" description="D-aminoacyl-tRNA deacylase">
    <location>
        <begin position="1"/>
        <end position="152"/>
    </location>
</feature>
<feature type="short sequence motif" description="Gly-cisPro motif, important for rejection of L-amino acids" evidence="1">
    <location>
        <begin position="142"/>
        <end position="143"/>
    </location>
</feature>
<proteinExistence type="inferred from homology"/>
<evidence type="ECO:0000255" key="1">
    <source>
        <dbReference type="HAMAP-Rule" id="MF_00518"/>
    </source>
</evidence>
<sequence>MIALIQRVTRADVRVGGRTTGEIGAGLLALVCAERGDTEAAADKLLAKLLGYRVFSDAAGKMNLPVSNIDGEGRAGGLLLVSQFTLAADTNSGLRPSFTPAAPPDEGARLFDYFVAAARARHPIVETGEFGADMQVSLVNDGPVTFWLQVRP</sequence>
<dbReference type="EC" id="3.1.1.96" evidence="1"/>
<dbReference type="EMBL" id="CP000458">
    <property type="protein sequence ID" value="ABK07437.1"/>
    <property type="molecule type" value="Genomic_DNA"/>
</dbReference>
<dbReference type="RefSeq" id="WP_011544595.1">
    <property type="nucleotide sequence ID" value="NC_008542.1"/>
</dbReference>
<dbReference type="SMR" id="A0K4L0"/>
<dbReference type="GeneID" id="83047451"/>
<dbReference type="KEGG" id="bch:Bcen2424_0684"/>
<dbReference type="HOGENOM" id="CLU_076901_1_1_4"/>
<dbReference type="GO" id="GO:0005737">
    <property type="term" value="C:cytoplasm"/>
    <property type="evidence" value="ECO:0007669"/>
    <property type="project" value="UniProtKB-SubCell"/>
</dbReference>
<dbReference type="GO" id="GO:0051500">
    <property type="term" value="F:D-tyrosyl-tRNA(Tyr) deacylase activity"/>
    <property type="evidence" value="ECO:0007669"/>
    <property type="project" value="TreeGrafter"/>
</dbReference>
<dbReference type="GO" id="GO:0106026">
    <property type="term" value="F:Gly-tRNA(Ala) deacylase activity"/>
    <property type="evidence" value="ECO:0007669"/>
    <property type="project" value="UniProtKB-UniRule"/>
</dbReference>
<dbReference type="GO" id="GO:0043908">
    <property type="term" value="F:Ser(Gly)-tRNA(Ala) hydrolase activity"/>
    <property type="evidence" value="ECO:0007669"/>
    <property type="project" value="UniProtKB-UniRule"/>
</dbReference>
<dbReference type="GO" id="GO:0000049">
    <property type="term" value="F:tRNA binding"/>
    <property type="evidence" value="ECO:0007669"/>
    <property type="project" value="UniProtKB-UniRule"/>
</dbReference>
<dbReference type="GO" id="GO:0019478">
    <property type="term" value="P:D-amino acid catabolic process"/>
    <property type="evidence" value="ECO:0007669"/>
    <property type="project" value="UniProtKB-UniRule"/>
</dbReference>
<dbReference type="CDD" id="cd00563">
    <property type="entry name" value="Dtyr_deacylase"/>
    <property type="match status" value="1"/>
</dbReference>
<dbReference type="FunFam" id="3.50.80.10:FF:000001">
    <property type="entry name" value="D-aminoacyl-tRNA deacylase"/>
    <property type="match status" value="1"/>
</dbReference>
<dbReference type="Gene3D" id="3.50.80.10">
    <property type="entry name" value="D-tyrosyl-tRNA(Tyr) deacylase"/>
    <property type="match status" value="1"/>
</dbReference>
<dbReference type="HAMAP" id="MF_00518">
    <property type="entry name" value="Deacylase_Dtd"/>
    <property type="match status" value="1"/>
</dbReference>
<dbReference type="InterPro" id="IPR003732">
    <property type="entry name" value="Daa-tRNA_deacyls_DTD"/>
</dbReference>
<dbReference type="InterPro" id="IPR023509">
    <property type="entry name" value="DTD-like_sf"/>
</dbReference>
<dbReference type="NCBIfam" id="TIGR00256">
    <property type="entry name" value="D-aminoacyl-tRNA deacylase"/>
    <property type="match status" value="1"/>
</dbReference>
<dbReference type="PANTHER" id="PTHR10472:SF5">
    <property type="entry name" value="D-AMINOACYL-TRNA DEACYLASE 1"/>
    <property type="match status" value="1"/>
</dbReference>
<dbReference type="PANTHER" id="PTHR10472">
    <property type="entry name" value="D-TYROSYL-TRNA TYR DEACYLASE"/>
    <property type="match status" value="1"/>
</dbReference>
<dbReference type="Pfam" id="PF02580">
    <property type="entry name" value="Tyr_Deacylase"/>
    <property type="match status" value="1"/>
</dbReference>
<dbReference type="SUPFAM" id="SSF69500">
    <property type="entry name" value="DTD-like"/>
    <property type="match status" value="1"/>
</dbReference>
<reference key="1">
    <citation type="submission" date="2006-08" db="EMBL/GenBank/DDBJ databases">
        <title>Complete sequence of chromosome 1 of Burkholderia cenocepacia HI2424.</title>
        <authorList>
            <person name="Copeland A."/>
            <person name="Lucas S."/>
            <person name="Lapidus A."/>
            <person name="Barry K."/>
            <person name="Detter J.C."/>
            <person name="Glavina del Rio T."/>
            <person name="Hammon N."/>
            <person name="Israni S."/>
            <person name="Pitluck S."/>
            <person name="Chain P."/>
            <person name="Malfatti S."/>
            <person name="Shin M."/>
            <person name="Vergez L."/>
            <person name="Schmutz J."/>
            <person name="Larimer F."/>
            <person name="Land M."/>
            <person name="Hauser L."/>
            <person name="Kyrpides N."/>
            <person name="Kim E."/>
            <person name="LiPuma J.J."/>
            <person name="Gonzalez C.F."/>
            <person name="Konstantinidis K."/>
            <person name="Tiedje J.M."/>
            <person name="Richardson P."/>
        </authorList>
    </citation>
    <scope>NUCLEOTIDE SEQUENCE [LARGE SCALE GENOMIC DNA]</scope>
    <source>
        <strain>HI2424</strain>
    </source>
</reference>
<accession>A0K4L0</accession>
<comment type="function">
    <text evidence="1">An aminoacyl-tRNA editing enzyme that deacylates mischarged D-aminoacyl-tRNAs. Also deacylates mischarged glycyl-tRNA(Ala), protecting cells against glycine mischarging by AlaRS. Acts via tRNA-based rather than protein-based catalysis; rejects L-amino acids rather than detecting D-amino acids in the active site. By recycling D-aminoacyl-tRNA to D-amino acids and free tRNA molecules, this enzyme counteracts the toxicity associated with the formation of D-aminoacyl-tRNA entities in vivo and helps enforce protein L-homochirality.</text>
</comment>
<comment type="catalytic activity">
    <reaction evidence="1">
        <text>glycyl-tRNA(Ala) + H2O = tRNA(Ala) + glycine + H(+)</text>
        <dbReference type="Rhea" id="RHEA:53744"/>
        <dbReference type="Rhea" id="RHEA-COMP:9657"/>
        <dbReference type="Rhea" id="RHEA-COMP:13640"/>
        <dbReference type="ChEBI" id="CHEBI:15377"/>
        <dbReference type="ChEBI" id="CHEBI:15378"/>
        <dbReference type="ChEBI" id="CHEBI:57305"/>
        <dbReference type="ChEBI" id="CHEBI:78442"/>
        <dbReference type="ChEBI" id="CHEBI:78522"/>
        <dbReference type="EC" id="3.1.1.96"/>
    </reaction>
</comment>
<comment type="catalytic activity">
    <reaction evidence="1">
        <text>a D-aminoacyl-tRNA + H2O = a tRNA + a D-alpha-amino acid + H(+)</text>
        <dbReference type="Rhea" id="RHEA:13953"/>
        <dbReference type="Rhea" id="RHEA-COMP:10123"/>
        <dbReference type="Rhea" id="RHEA-COMP:10124"/>
        <dbReference type="ChEBI" id="CHEBI:15377"/>
        <dbReference type="ChEBI" id="CHEBI:15378"/>
        <dbReference type="ChEBI" id="CHEBI:59871"/>
        <dbReference type="ChEBI" id="CHEBI:78442"/>
        <dbReference type="ChEBI" id="CHEBI:79333"/>
        <dbReference type="EC" id="3.1.1.96"/>
    </reaction>
</comment>
<comment type="subunit">
    <text evidence="1">Homodimer.</text>
</comment>
<comment type="subcellular location">
    <subcellularLocation>
        <location evidence="1">Cytoplasm</location>
    </subcellularLocation>
</comment>
<comment type="domain">
    <text evidence="1">A Gly-cisPro motif from one monomer fits into the active site of the other monomer to allow specific chiral rejection of L-amino acids.</text>
</comment>
<comment type="similarity">
    <text evidence="1">Belongs to the DTD family.</text>
</comment>
<gene>
    <name evidence="1" type="primary">dtd</name>
    <name type="ordered locus">Bcen2424_0684</name>
</gene>
<protein>
    <recommendedName>
        <fullName evidence="1">D-aminoacyl-tRNA deacylase</fullName>
        <shortName evidence="1">DTD</shortName>
        <ecNumber evidence="1">3.1.1.96</ecNumber>
    </recommendedName>
    <alternativeName>
        <fullName evidence="1">Gly-tRNA(Ala) deacylase</fullName>
    </alternativeName>
</protein>
<organism>
    <name type="scientific">Burkholderia cenocepacia (strain HI2424)</name>
    <dbReference type="NCBI Taxonomy" id="331272"/>
    <lineage>
        <taxon>Bacteria</taxon>
        <taxon>Pseudomonadati</taxon>
        <taxon>Pseudomonadota</taxon>
        <taxon>Betaproteobacteria</taxon>
        <taxon>Burkholderiales</taxon>
        <taxon>Burkholderiaceae</taxon>
        <taxon>Burkholderia</taxon>
        <taxon>Burkholderia cepacia complex</taxon>
    </lineage>
</organism>
<keyword id="KW-0963">Cytoplasm</keyword>
<keyword id="KW-0378">Hydrolase</keyword>
<keyword id="KW-0694">RNA-binding</keyword>
<keyword id="KW-0820">tRNA-binding</keyword>
<name>DTD_BURCH</name>